<dbReference type="EMBL" id="DS480434">
    <property type="protein sequence ID" value="EDO16067.1"/>
    <property type="molecule type" value="Genomic_DNA"/>
</dbReference>
<dbReference type="RefSeq" id="XP_001643925.1">
    <property type="nucleotide sequence ID" value="XM_001643875.1"/>
</dbReference>
<dbReference type="FunCoup" id="A7TNS4">
    <property type="interactions" value="20"/>
</dbReference>
<dbReference type="STRING" id="436907.A7TNS4"/>
<dbReference type="GeneID" id="5544212"/>
<dbReference type="KEGG" id="vpo:Kpol_1016p7"/>
<dbReference type="eggNOG" id="ENOG502QV3R">
    <property type="taxonomic scope" value="Eukaryota"/>
</dbReference>
<dbReference type="HOGENOM" id="CLU_011918_1_0_1"/>
<dbReference type="InParanoid" id="A7TNS4"/>
<dbReference type="OMA" id="KWEFEAR"/>
<dbReference type="OrthoDB" id="289228at2759"/>
<dbReference type="PhylomeDB" id="A7TNS4"/>
<dbReference type="Proteomes" id="UP000000267">
    <property type="component" value="Unassembled WGS sequence"/>
</dbReference>
<dbReference type="GO" id="GO:0000329">
    <property type="term" value="C:fungal-type vacuole membrane"/>
    <property type="evidence" value="ECO:0007669"/>
    <property type="project" value="EnsemblFungi"/>
</dbReference>
<dbReference type="GO" id="GO:0005634">
    <property type="term" value="C:nucleus"/>
    <property type="evidence" value="ECO:0007669"/>
    <property type="project" value="TreeGrafter"/>
</dbReference>
<dbReference type="GO" id="GO:0032984">
    <property type="term" value="P:protein-containing complex disassembly"/>
    <property type="evidence" value="ECO:0007669"/>
    <property type="project" value="EnsemblFungi"/>
</dbReference>
<dbReference type="GO" id="GO:0006979">
    <property type="term" value="P:response to oxidative stress"/>
    <property type="evidence" value="ECO:0007669"/>
    <property type="project" value="TreeGrafter"/>
</dbReference>
<dbReference type="InterPro" id="IPR006571">
    <property type="entry name" value="TLDc_dom"/>
</dbReference>
<dbReference type="PANTHER" id="PTHR23354">
    <property type="entry name" value="NUCLEOLAR PROTEIN 7/ESTROGEN RECEPTOR COACTIVATOR-RELATED"/>
    <property type="match status" value="1"/>
</dbReference>
<dbReference type="PANTHER" id="PTHR23354:SF130">
    <property type="entry name" value="RESTRICTION OF TELOMERE CAPPING PROTEIN 5"/>
    <property type="match status" value="1"/>
</dbReference>
<dbReference type="Pfam" id="PF07534">
    <property type="entry name" value="TLD"/>
    <property type="match status" value="1"/>
</dbReference>
<dbReference type="SMART" id="SM00584">
    <property type="entry name" value="TLDc"/>
    <property type="match status" value="1"/>
</dbReference>
<dbReference type="PROSITE" id="PS51886">
    <property type="entry name" value="TLDC"/>
    <property type="match status" value="1"/>
</dbReference>
<comment type="function">
    <text evidence="1">May be involved in a process influencing telomere capping.</text>
</comment>
<comment type="subcellular location">
    <subcellularLocation>
        <location evidence="1">Cytoplasm</location>
    </subcellularLocation>
</comment>
<comment type="similarity">
    <text evidence="4">Belongs to the RTC5 family.</text>
</comment>
<organism>
    <name type="scientific">Vanderwaltozyma polyspora (strain ATCC 22028 / DSM 70294 / BCRC 21397 / CBS 2163 / NBRC 10782 / NRRL Y-8283 / UCD 57-17)</name>
    <name type="common">Kluyveromyces polysporus</name>
    <dbReference type="NCBI Taxonomy" id="436907"/>
    <lineage>
        <taxon>Eukaryota</taxon>
        <taxon>Fungi</taxon>
        <taxon>Dikarya</taxon>
        <taxon>Ascomycota</taxon>
        <taxon>Saccharomycotina</taxon>
        <taxon>Saccharomycetes</taxon>
        <taxon>Saccharomycetales</taxon>
        <taxon>Saccharomycetaceae</taxon>
        <taxon>Vanderwaltozyma</taxon>
    </lineage>
</organism>
<evidence type="ECO:0000250" key="1"/>
<evidence type="ECO:0000255" key="2">
    <source>
        <dbReference type="PROSITE-ProRule" id="PRU01234"/>
    </source>
</evidence>
<evidence type="ECO:0000256" key="3">
    <source>
        <dbReference type="SAM" id="MobiDB-lite"/>
    </source>
</evidence>
<evidence type="ECO:0000305" key="4"/>
<gene>
    <name type="primary">RTC5</name>
    <name type="ORF">Kpol_1016p7</name>
</gene>
<reference key="1">
    <citation type="journal article" date="2007" name="Proc. Natl. Acad. Sci. U.S.A.">
        <title>Independent sorting-out of thousands of duplicated gene pairs in two yeast species descended from a whole-genome duplication.</title>
        <authorList>
            <person name="Scannell D.R."/>
            <person name="Frank A.C."/>
            <person name="Conant G.C."/>
            <person name="Byrne K.P."/>
            <person name="Woolfit M."/>
            <person name="Wolfe K.H."/>
        </authorList>
    </citation>
    <scope>NUCLEOTIDE SEQUENCE [LARGE SCALE GENOMIC DNA]</scope>
    <source>
        <strain>ATCC 22028 / DSM 70294 / BCRC 21397 / CBS 2163 / NBRC 10782 / NRRL Y-8283 / UCD 57-17</strain>
    </source>
</reference>
<feature type="chain" id="PRO_0000408849" description="Restriction of telomere capping protein 5">
    <location>
        <begin position="1"/>
        <end position="562"/>
    </location>
</feature>
<feature type="domain" description="TLDc" evidence="2">
    <location>
        <begin position="283"/>
        <end position="509"/>
    </location>
</feature>
<feature type="region of interest" description="Disordered" evidence="3">
    <location>
        <begin position="1"/>
        <end position="21"/>
    </location>
</feature>
<feature type="compositionally biased region" description="Basic and acidic residues" evidence="3">
    <location>
        <begin position="10"/>
        <end position="21"/>
    </location>
</feature>
<proteinExistence type="inferred from homology"/>
<name>RTC5_VANPO</name>
<accession>A7TNS4</accession>
<keyword id="KW-0963">Cytoplasm</keyword>
<keyword id="KW-1185">Reference proteome</keyword>
<sequence length="562" mass="64041">MGQTPSVESQESKETKNEMPELKSREDILDFFNNRSLSILLPMEIECFKSRLGDKDLSDPLTKDEFNTLLRIADSNSQLQILLWNFFLKISAFPFLSNRSESMTGFGILKGIILLTRERIKKYLGWSNAKLIKLIFIGLTSQEKVGVKTEASVFKIQHVLDTLDGIDLASSTVKDTDMLSFITWLLLLSVHCPTSNCKLNEKSLYDKWKDYEIVASSMVRSMNKKITTTGKGIGISYSDFSHTIVAVSKNVMSPLENIVEHMLYKQDDLLEFPCLDTFLKETKLMTYPLVAQLCTVLPNEIVMSQLQKLYVGRESGYSMRSLQSKVFNWKAATILLVSGTRIVDDIEYSENKNPRYKRFLEEYPKLKDEDQEMDDCHNLKKKVTFAVYIDEPWRVTNKNYFGEKRTSIIELSPRQDKFNSLKVGSVYFNTIGGGIGIGNNQPVTKLNSVRYAPGNVSLTLDNTLEFGVFRHTGYGGTIGPSELLKKNNEENKAFEIRFLIRDVEVWGCGGEKELEEQLREWKWEEAEAKRRQEINLKTMGEDRALLEMAGIIGQHGQSGGSI</sequence>
<protein>
    <recommendedName>
        <fullName>Restriction of telomere capping protein 5</fullName>
    </recommendedName>
</protein>